<reference key="1">
    <citation type="journal article" date="2005" name="Nucleic Acids Res.">
        <title>Genome dynamics and diversity of Shigella species, the etiologic agents of bacillary dysentery.</title>
        <authorList>
            <person name="Yang F."/>
            <person name="Yang J."/>
            <person name="Zhang X."/>
            <person name="Chen L."/>
            <person name="Jiang Y."/>
            <person name="Yan Y."/>
            <person name="Tang X."/>
            <person name="Wang J."/>
            <person name="Xiong Z."/>
            <person name="Dong J."/>
            <person name="Xue Y."/>
            <person name="Zhu Y."/>
            <person name="Xu X."/>
            <person name="Sun L."/>
            <person name="Chen S."/>
            <person name="Nie H."/>
            <person name="Peng J."/>
            <person name="Xu J."/>
            <person name="Wang Y."/>
            <person name="Yuan Z."/>
            <person name="Wen Y."/>
            <person name="Yao Z."/>
            <person name="Shen Y."/>
            <person name="Qiang B."/>
            <person name="Hou Y."/>
            <person name="Yu J."/>
            <person name="Jin Q."/>
        </authorList>
    </citation>
    <scope>NUCLEOTIDE SEQUENCE [LARGE SCALE GENOMIC DNA]</scope>
    <source>
        <strain>Ss046</strain>
    </source>
</reference>
<keyword id="KW-0029">Amino-acid transport</keyword>
<keyword id="KW-0997">Cell inner membrane</keyword>
<keyword id="KW-1003">Cell membrane</keyword>
<keyword id="KW-0472">Membrane</keyword>
<keyword id="KW-1185">Reference proteome</keyword>
<keyword id="KW-0812">Transmembrane</keyword>
<keyword id="KW-1133">Transmembrane helix</keyword>
<keyword id="KW-0813">Transport</keyword>
<sequence length="195" mass="21248">MTPTLLSAFWTYTLITAMTPGPNNILALSSATSHGFRQSTRVLAGMSLGFLIVMLLCAGISFSLAVIDPAAVHLLSWAGAAYIVWLAWKIATSPTKEDGLQAKPISFWASFALQFVNVKIILYGVTALSTFVLPQTQALSWVVGVSVLLAMIGTFGNVCWALAGHLFQRLFRQYGRQLNIVLALLLVYCAVRIFY</sequence>
<accession>Q3YYT7</accession>
<feature type="chain" id="PRO_0000318735" description="Cysteine/O-acetylserine efflux protein">
    <location>
        <begin position="1"/>
        <end position="195"/>
    </location>
</feature>
<feature type="topological domain" description="Periplasmic" evidence="2">
    <location>
        <begin position="1"/>
        <end position="7"/>
    </location>
</feature>
<feature type="transmembrane region" description="Helical" evidence="2">
    <location>
        <begin position="8"/>
        <end position="28"/>
    </location>
</feature>
<feature type="topological domain" description="Cytoplasmic" evidence="2">
    <location>
        <begin position="29"/>
        <end position="46"/>
    </location>
</feature>
<feature type="transmembrane region" description="Helical" evidence="2">
    <location>
        <begin position="47"/>
        <end position="67"/>
    </location>
</feature>
<feature type="topological domain" description="Periplasmic" evidence="2">
    <location>
        <begin position="68"/>
        <end position="69"/>
    </location>
</feature>
<feature type="transmembrane region" description="Helical" evidence="2">
    <location>
        <begin position="70"/>
        <end position="90"/>
    </location>
</feature>
<feature type="topological domain" description="Cytoplasmic" evidence="2">
    <location>
        <begin position="91"/>
        <end position="104"/>
    </location>
</feature>
<feature type="transmembrane region" description="Helical" evidence="2">
    <location>
        <begin position="105"/>
        <end position="125"/>
    </location>
</feature>
<feature type="topological domain" description="Periplasmic" evidence="2">
    <location>
        <begin position="126"/>
        <end position="141"/>
    </location>
</feature>
<feature type="transmembrane region" description="Helical" evidence="2">
    <location>
        <begin position="142"/>
        <end position="162"/>
    </location>
</feature>
<feature type="topological domain" description="Cytoplasmic" evidence="2">
    <location>
        <begin position="163"/>
        <end position="176"/>
    </location>
</feature>
<feature type="transmembrane region" description="Helical" evidence="2">
    <location>
        <begin position="177"/>
        <end position="194"/>
    </location>
</feature>
<feature type="topological domain" description="Periplasmic" evidence="1">
    <location>
        <position position="195"/>
    </location>
</feature>
<name>EAMB_SHISS</name>
<organism>
    <name type="scientific">Shigella sonnei (strain Ss046)</name>
    <dbReference type="NCBI Taxonomy" id="300269"/>
    <lineage>
        <taxon>Bacteria</taxon>
        <taxon>Pseudomonadati</taxon>
        <taxon>Pseudomonadota</taxon>
        <taxon>Gammaproteobacteria</taxon>
        <taxon>Enterobacterales</taxon>
        <taxon>Enterobacteriaceae</taxon>
        <taxon>Shigella</taxon>
    </lineage>
</organism>
<proteinExistence type="inferred from homology"/>
<protein>
    <recommendedName>
        <fullName evidence="1">Cysteine/O-acetylserine efflux protein</fullName>
    </recommendedName>
</protein>
<evidence type="ECO:0000250" key="1">
    <source>
        <dbReference type="UniProtKB" id="P38101"/>
    </source>
</evidence>
<evidence type="ECO:0000255" key="2"/>
<evidence type="ECO:0000305" key="3"/>
<gene>
    <name type="primary">eamB</name>
    <name type="ordered locus">SSON_2704</name>
</gene>
<dbReference type="EMBL" id="CP000038">
    <property type="protein sequence ID" value="AAZ89325.1"/>
    <property type="molecule type" value="Genomic_DNA"/>
</dbReference>
<dbReference type="RefSeq" id="WP_000189207.1">
    <property type="nucleotide sequence ID" value="NC_007384.1"/>
</dbReference>
<dbReference type="GeneID" id="93774508"/>
<dbReference type="KEGG" id="ssn:SSON_2704"/>
<dbReference type="HOGENOM" id="CLU_079569_1_2_6"/>
<dbReference type="Proteomes" id="UP000002529">
    <property type="component" value="Chromosome"/>
</dbReference>
<dbReference type="GO" id="GO:0005886">
    <property type="term" value="C:plasma membrane"/>
    <property type="evidence" value="ECO:0007669"/>
    <property type="project" value="UniProtKB-SubCell"/>
</dbReference>
<dbReference type="GO" id="GO:0015171">
    <property type="term" value="F:amino acid transmembrane transporter activity"/>
    <property type="evidence" value="ECO:0007669"/>
    <property type="project" value="TreeGrafter"/>
</dbReference>
<dbReference type="GO" id="GO:0033228">
    <property type="term" value="P:cysteine export across plasma membrane"/>
    <property type="evidence" value="ECO:0007669"/>
    <property type="project" value="TreeGrafter"/>
</dbReference>
<dbReference type="InterPro" id="IPR001123">
    <property type="entry name" value="LeuE-type"/>
</dbReference>
<dbReference type="NCBIfam" id="NF007653">
    <property type="entry name" value="PRK10323.1"/>
    <property type="match status" value="1"/>
</dbReference>
<dbReference type="PANTHER" id="PTHR30086">
    <property type="entry name" value="ARGININE EXPORTER PROTEIN ARGO"/>
    <property type="match status" value="1"/>
</dbReference>
<dbReference type="PANTHER" id="PTHR30086:SF20">
    <property type="entry name" value="ARGININE EXPORTER PROTEIN ARGO-RELATED"/>
    <property type="match status" value="1"/>
</dbReference>
<dbReference type="Pfam" id="PF01810">
    <property type="entry name" value="LysE"/>
    <property type="match status" value="1"/>
</dbReference>
<comment type="function">
    <text evidence="1">Exporter of O-acetylserine (OAS) and cysteine.</text>
</comment>
<comment type="catalytic activity">
    <reaction evidence="1">
        <text>O-acetyl-L-serine(in) = O-acetyl-L-serine(out)</text>
        <dbReference type="Rhea" id="RHEA:29659"/>
        <dbReference type="ChEBI" id="CHEBI:58340"/>
    </reaction>
    <physiologicalReaction direction="left-to-right" evidence="1">
        <dbReference type="Rhea" id="RHEA:29660"/>
    </physiologicalReaction>
</comment>
<comment type="catalytic activity">
    <reaction evidence="1">
        <text>L-cysteine(in) = L-cysteine(out)</text>
        <dbReference type="Rhea" id="RHEA:29655"/>
        <dbReference type="ChEBI" id="CHEBI:35235"/>
    </reaction>
    <physiologicalReaction direction="left-to-right" evidence="1">
        <dbReference type="Rhea" id="RHEA:29656"/>
    </physiologicalReaction>
</comment>
<comment type="subcellular location">
    <subcellularLocation>
        <location evidence="1">Cell inner membrane</location>
        <topology evidence="2">Multi-pass membrane protein</topology>
    </subcellularLocation>
</comment>
<comment type="similarity">
    <text evidence="3">Belongs to the Rht family.</text>
</comment>